<evidence type="ECO:0000255" key="1">
    <source>
        <dbReference type="HAMAP-Rule" id="MF_00012"/>
    </source>
</evidence>
<gene>
    <name evidence="1" type="primary">ilvD</name>
    <name type="ordered locus">ECUMN_4297</name>
</gene>
<keyword id="KW-0001">2Fe-2S</keyword>
<keyword id="KW-0028">Amino-acid biosynthesis</keyword>
<keyword id="KW-0100">Branched-chain amino acid biosynthesis</keyword>
<keyword id="KW-0408">Iron</keyword>
<keyword id="KW-0411">Iron-sulfur</keyword>
<keyword id="KW-0456">Lyase</keyword>
<keyword id="KW-0460">Magnesium</keyword>
<keyword id="KW-0479">Metal-binding</keyword>
<reference key="1">
    <citation type="journal article" date="2009" name="PLoS Genet.">
        <title>Organised genome dynamics in the Escherichia coli species results in highly diverse adaptive paths.</title>
        <authorList>
            <person name="Touchon M."/>
            <person name="Hoede C."/>
            <person name="Tenaillon O."/>
            <person name="Barbe V."/>
            <person name="Baeriswyl S."/>
            <person name="Bidet P."/>
            <person name="Bingen E."/>
            <person name="Bonacorsi S."/>
            <person name="Bouchier C."/>
            <person name="Bouvet O."/>
            <person name="Calteau A."/>
            <person name="Chiapello H."/>
            <person name="Clermont O."/>
            <person name="Cruveiller S."/>
            <person name="Danchin A."/>
            <person name="Diard M."/>
            <person name="Dossat C."/>
            <person name="Karoui M.E."/>
            <person name="Frapy E."/>
            <person name="Garry L."/>
            <person name="Ghigo J.M."/>
            <person name="Gilles A.M."/>
            <person name="Johnson J."/>
            <person name="Le Bouguenec C."/>
            <person name="Lescat M."/>
            <person name="Mangenot S."/>
            <person name="Martinez-Jehanne V."/>
            <person name="Matic I."/>
            <person name="Nassif X."/>
            <person name="Oztas S."/>
            <person name="Petit M.A."/>
            <person name="Pichon C."/>
            <person name="Rouy Z."/>
            <person name="Ruf C.S."/>
            <person name="Schneider D."/>
            <person name="Tourret J."/>
            <person name="Vacherie B."/>
            <person name="Vallenet D."/>
            <person name="Medigue C."/>
            <person name="Rocha E.P.C."/>
            <person name="Denamur E."/>
        </authorList>
    </citation>
    <scope>NUCLEOTIDE SEQUENCE [LARGE SCALE GENOMIC DNA]</scope>
    <source>
        <strain>UMN026 / ExPEC</strain>
    </source>
</reference>
<proteinExistence type="inferred from homology"/>
<protein>
    <recommendedName>
        <fullName evidence="1">Dihydroxy-acid dehydratase</fullName>
        <shortName evidence="1">DAD</shortName>
        <ecNumber evidence="1">4.2.1.9</ecNumber>
    </recommendedName>
</protein>
<organism>
    <name type="scientific">Escherichia coli O17:K52:H18 (strain UMN026 / ExPEC)</name>
    <dbReference type="NCBI Taxonomy" id="585056"/>
    <lineage>
        <taxon>Bacteria</taxon>
        <taxon>Pseudomonadati</taxon>
        <taxon>Pseudomonadota</taxon>
        <taxon>Gammaproteobacteria</taxon>
        <taxon>Enterobacterales</taxon>
        <taxon>Enterobacteriaceae</taxon>
        <taxon>Escherichia</taxon>
    </lineage>
</organism>
<comment type="function">
    <text evidence="1">Functions in the biosynthesis of branched-chain amino acids. Catalyzes the dehydration of (2R,3R)-2,3-dihydroxy-3-methylpentanoate (2,3-dihydroxy-3-methylvalerate) into 2-oxo-3-methylpentanoate (2-oxo-3-methylvalerate) and of (2R)-2,3-dihydroxy-3-methylbutanoate (2,3-dihydroxyisovalerate) into 2-oxo-3-methylbutanoate (2-oxoisovalerate), the penultimate precursor to L-isoleucine and L-valine, respectively.</text>
</comment>
<comment type="catalytic activity">
    <reaction evidence="1">
        <text>(2R)-2,3-dihydroxy-3-methylbutanoate = 3-methyl-2-oxobutanoate + H2O</text>
        <dbReference type="Rhea" id="RHEA:24809"/>
        <dbReference type="ChEBI" id="CHEBI:11851"/>
        <dbReference type="ChEBI" id="CHEBI:15377"/>
        <dbReference type="ChEBI" id="CHEBI:49072"/>
        <dbReference type="EC" id="4.2.1.9"/>
    </reaction>
    <physiologicalReaction direction="left-to-right" evidence="1">
        <dbReference type="Rhea" id="RHEA:24810"/>
    </physiologicalReaction>
</comment>
<comment type="catalytic activity">
    <reaction evidence="1">
        <text>(2R,3R)-2,3-dihydroxy-3-methylpentanoate = (S)-3-methyl-2-oxopentanoate + H2O</text>
        <dbReference type="Rhea" id="RHEA:27694"/>
        <dbReference type="ChEBI" id="CHEBI:15377"/>
        <dbReference type="ChEBI" id="CHEBI:35146"/>
        <dbReference type="ChEBI" id="CHEBI:49258"/>
        <dbReference type="EC" id="4.2.1.9"/>
    </reaction>
    <physiologicalReaction direction="left-to-right" evidence="1">
        <dbReference type="Rhea" id="RHEA:27695"/>
    </physiologicalReaction>
</comment>
<comment type="cofactor">
    <cofactor evidence="1">
        <name>[2Fe-2S] cluster</name>
        <dbReference type="ChEBI" id="CHEBI:190135"/>
    </cofactor>
    <text evidence="1">Binds 1 [2Fe-2S] cluster per subunit. This cluster acts as a Lewis acid cofactor.</text>
</comment>
<comment type="cofactor">
    <cofactor evidence="1">
        <name>Mg(2+)</name>
        <dbReference type="ChEBI" id="CHEBI:18420"/>
    </cofactor>
</comment>
<comment type="pathway">
    <text evidence="1">Amino-acid biosynthesis; L-isoleucine biosynthesis; L-isoleucine from 2-oxobutanoate: step 3/4.</text>
</comment>
<comment type="pathway">
    <text evidence="1">Amino-acid biosynthesis; L-valine biosynthesis; L-valine from pyruvate: step 3/4.</text>
</comment>
<comment type="subunit">
    <text evidence="1">Homodimer.</text>
</comment>
<comment type="similarity">
    <text evidence="1">Belongs to the IlvD/Edd family.</text>
</comment>
<dbReference type="EC" id="4.2.1.9" evidence="1"/>
<dbReference type="EMBL" id="CU928163">
    <property type="protein sequence ID" value="CAR15433.1"/>
    <property type="molecule type" value="Genomic_DNA"/>
</dbReference>
<dbReference type="RefSeq" id="WP_001127397.1">
    <property type="nucleotide sequence ID" value="NC_011751.1"/>
</dbReference>
<dbReference type="RefSeq" id="YP_002414928.1">
    <property type="nucleotide sequence ID" value="NC_011751.1"/>
</dbReference>
<dbReference type="SMR" id="B7NF78"/>
<dbReference type="STRING" id="585056.ECUMN_4297"/>
<dbReference type="KEGG" id="eum:ECUMN_4297"/>
<dbReference type="PATRIC" id="fig|585056.7.peg.4464"/>
<dbReference type="HOGENOM" id="CLU_014271_4_2_6"/>
<dbReference type="UniPathway" id="UPA00047">
    <property type="reaction ID" value="UER00057"/>
</dbReference>
<dbReference type="UniPathway" id="UPA00049">
    <property type="reaction ID" value="UER00061"/>
</dbReference>
<dbReference type="Proteomes" id="UP000007097">
    <property type="component" value="Chromosome"/>
</dbReference>
<dbReference type="GO" id="GO:0005829">
    <property type="term" value="C:cytosol"/>
    <property type="evidence" value="ECO:0007669"/>
    <property type="project" value="TreeGrafter"/>
</dbReference>
<dbReference type="GO" id="GO:0051537">
    <property type="term" value="F:2 iron, 2 sulfur cluster binding"/>
    <property type="evidence" value="ECO:0007669"/>
    <property type="project" value="UniProtKB-UniRule"/>
</dbReference>
<dbReference type="GO" id="GO:0004160">
    <property type="term" value="F:dihydroxy-acid dehydratase activity"/>
    <property type="evidence" value="ECO:0007669"/>
    <property type="project" value="UniProtKB-UniRule"/>
</dbReference>
<dbReference type="GO" id="GO:0000287">
    <property type="term" value="F:magnesium ion binding"/>
    <property type="evidence" value="ECO:0007669"/>
    <property type="project" value="UniProtKB-UniRule"/>
</dbReference>
<dbReference type="GO" id="GO:0009097">
    <property type="term" value="P:isoleucine biosynthetic process"/>
    <property type="evidence" value="ECO:0007669"/>
    <property type="project" value="UniProtKB-UniRule"/>
</dbReference>
<dbReference type="GO" id="GO:0009099">
    <property type="term" value="P:L-valine biosynthetic process"/>
    <property type="evidence" value="ECO:0007669"/>
    <property type="project" value="UniProtKB-UniRule"/>
</dbReference>
<dbReference type="FunFam" id="3.50.30.80:FF:000001">
    <property type="entry name" value="Dihydroxy-acid dehydratase"/>
    <property type="match status" value="1"/>
</dbReference>
<dbReference type="Gene3D" id="3.50.30.80">
    <property type="entry name" value="IlvD/EDD C-terminal domain-like"/>
    <property type="match status" value="1"/>
</dbReference>
<dbReference type="HAMAP" id="MF_00012">
    <property type="entry name" value="IlvD"/>
    <property type="match status" value="1"/>
</dbReference>
<dbReference type="InterPro" id="IPR042096">
    <property type="entry name" value="Dihydro-acid_dehy_C"/>
</dbReference>
<dbReference type="InterPro" id="IPR004404">
    <property type="entry name" value="DihydroxyA_deHydtase"/>
</dbReference>
<dbReference type="InterPro" id="IPR020558">
    <property type="entry name" value="DiOHA_6PGluconate_deHydtase_CS"/>
</dbReference>
<dbReference type="InterPro" id="IPR056740">
    <property type="entry name" value="ILV_EDD_C"/>
</dbReference>
<dbReference type="InterPro" id="IPR000581">
    <property type="entry name" value="ILV_EDD_N"/>
</dbReference>
<dbReference type="InterPro" id="IPR037237">
    <property type="entry name" value="IlvD/EDD_N"/>
</dbReference>
<dbReference type="NCBIfam" id="TIGR00110">
    <property type="entry name" value="ilvD"/>
    <property type="match status" value="1"/>
</dbReference>
<dbReference type="NCBIfam" id="NF009103">
    <property type="entry name" value="PRK12448.1"/>
    <property type="match status" value="1"/>
</dbReference>
<dbReference type="PANTHER" id="PTHR43661">
    <property type="entry name" value="D-XYLONATE DEHYDRATASE"/>
    <property type="match status" value="1"/>
</dbReference>
<dbReference type="PANTHER" id="PTHR43661:SF3">
    <property type="entry name" value="D-XYLONATE DEHYDRATASE YAGF-RELATED"/>
    <property type="match status" value="1"/>
</dbReference>
<dbReference type="Pfam" id="PF24877">
    <property type="entry name" value="ILV_EDD_C"/>
    <property type="match status" value="1"/>
</dbReference>
<dbReference type="Pfam" id="PF00920">
    <property type="entry name" value="ILVD_EDD_N"/>
    <property type="match status" value="1"/>
</dbReference>
<dbReference type="SUPFAM" id="SSF143975">
    <property type="entry name" value="IlvD/EDD N-terminal domain-like"/>
    <property type="match status" value="1"/>
</dbReference>
<dbReference type="SUPFAM" id="SSF52016">
    <property type="entry name" value="LeuD/IlvD-like"/>
    <property type="match status" value="1"/>
</dbReference>
<dbReference type="PROSITE" id="PS00886">
    <property type="entry name" value="ILVD_EDD_1"/>
    <property type="match status" value="1"/>
</dbReference>
<dbReference type="PROSITE" id="PS00887">
    <property type="entry name" value="ILVD_EDD_2"/>
    <property type="match status" value="1"/>
</dbReference>
<name>ILVD_ECOLU</name>
<sequence>MPKYRSATTTHGRNMAGARALWRATGMTDADFGKPIIAVVNSFTQFVPGHVHLRDLGKLVAEQIEAAGGVAKEFNTIAVDDGIAMGHGGMLYSLPSRELIADSVEYMVNAHCADAMVCISNCDKITPGMLMASLRLNIPVIFVSGGPMEAGKTKLSDQIIKLDLVDAMIQGADPKVSDSQSDQVERSACPTCGSCSGMFTANSMNCLTEALGLSQPGNGSLLATHADRKQLFLNAGKRIVELTKRYYEQNDESALPRNIASKAAFENAMTLDIAMGGSTNTVLHLLAAAQEAEIDFTMSDIDKLSRKVPQLCKVAPSTQKYHMEDVHRAGGVIGILGELDRAGLLNRDVKNVLGLTLPQTLEQYDVMLTQDDAVKNMFRAGPAGIRTTQAFSQDCRWDSLDDDRANGCIRSLEHAYSKDGGLAVLYGNFAENGCIVKTAGVDDSILKFTGPAKVYESQDDAVEAILGGKVVAGDVVVIRYEGPKGGPGMQEMLYPTSFLKSMGLGKVCALITDGRFSGGTSGLSIGHVSPEAASGGSIGLIEDGDLIAIDIPNRGIQLQVSDAELAARREAQEARGDKAWTPKNRERQVSFALRAYASLATSADKGAVRDKSKLGG</sequence>
<accession>B7NF78</accession>
<feature type="chain" id="PRO_1000116272" description="Dihydroxy-acid dehydratase">
    <location>
        <begin position="1"/>
        <end position="616"/>
    </location>
</feature>
<feature type="active site" description="Proton acceptor" evidence="1">
    <location>
        <position position="517"/>
    </location>
</feature>
<feature type="binding site" evidence="1">
    <location>
        <position position="81"/>
    </location>
    <ligand>
        <name>Mg(2+)</name>
        <dbReference type="ChEBI" id="CHEBI:18420"/>
    </ligand>
</feature>
<feature type="binding site" evidence="1">
    <location>
        <position position="122"/>
    </location>
    <ligand>
        <name>[2Fe-2S] cluster</name>
        <dbReference type="ChEBI" id="CHEBI:190135"/>
    </ligand>
</feature>
<feature type="binding site" evidence="1">
    <location>
        <position position="123"/>
    </location>
    <ligand>
        <name>Mg(2+)</name>
        <dbReference type="ChEBI" id="CHEBI:18420"/>
    </ligand>
</feature>
<feature type="binding site" description="via carbamate group" evidence="1">
    <location>
        <position position="124"/>
    </location>
    <ligand>
        <name>Mg(2+)</name>
        <dbReference type="ChEBI" id="CHEBI:18420"/>
    </ligand>
</feature>
<feature type="binding site" evidence="1">
    <location>
        <position position="195"/>
    </location>
    <ligand>
        <name>[2Fe-2S] cluster</name>
        <dbReference type="ChEBI" id="CHEBI:190135"/>
    </ligand>
</feature>
<feature type="binding site" evidence="1">
    <location>
        <position position="491"/>
    </location>
    <ligand>
        <name>Mg(2+)</name>
        <dbReference type="ChEBI" id="CHEBI:18420"/>
    </ligand>
</feature>
<feature type="modified residue" description="N6-carboxylysine" evidence="1">
    <location>
        <position position="124"/>
    </location>
</feature>